<accession>P09187</accession>
<reference key="1">
    <citation type="journal article" date="1989" name="Nucleic Acids Res.">
        <title>Nucleotide sequence of a cDNA clone encoding a leghemoglobin from Medicago sativa.</title>
        <authorList>
            <person name="Davidowitz E.J."/>
            <person name="Lang-Unnasch N."/>
        </authorList>
    </citation>
    <scope>NUCLEOTIDE SEQUENCE [MRNA]</scope>
    <source>
        <strain>cv. Iroquois</strain>
    </source>
</reference>
<reference key="2">
    <citation type="journal article" date="1988" name="Plant Mol. Biol.">
        <title>Identification of two groups of leghemoglobin genes in alfalfa (Medicago sativa) and a study of their expression during root nodule development.</title>
        <authorList>
            <person name="Barker D.G."/>
            <person name="Gallusci P."/>
            <person name="Lullien V."/>
            <person name="Khan H."/>
            <person name="Gherardi M."/>
            <person name="Huguet T."/>
        </authorList>
        <dbReference type="AGRICOLA" id="IND91035192"/>
    </citation>
    <scope>NUCLEOTIDE SEQUENCE [MRNA]</scope>
    <scope>TISSUE SPECIFICITY</scope>
    <source>
        <strain>cv. Hybrid 11 X 8</strain>
        <tissue>Root nodule</tissue>
    </source>
</reference>
<reference key="3">
    <citation type="journal article" date="1991" name="Plant Mol. Biol.">
        <title>Sequence analysis of alfalfa (Medicago sativa) leghemoglobin cDNA and genomic clones.</title>
        <authorList>
            <person name="Davidowitz E.J."/>
            <person name="Creissen G."/>
            <person name="Vincze E."/>
            <person name="Kiss G.B."/>
            <person name="Lang-Unnasch N."/>
        </authorList>
    </citation>
    <scope>NUCLEOTIDE SEQUENCE [MRNA]</scope>
</reference>
<proteinExistence type="evidence at transcript level"/>
<organism>
    <name type="scientific">Medicago sativa</name>
    <name type="common">Alfalfa</name>
    <dbReference type="NCBI Taxonomy" id="3879"/>
    <lineage>
        <taxon>Eukaryota</taxon>
        <taxon>Viridiplantae</taxon>
        <taxon>Streptophyta</taxon>
        <taxon>Embryophyta</taxon>
        <taxon>Tracheophyta</taxon>
        <taxon>Spermatophyta</taxon>
        <taxon>Magnoliopsida</taxon>
        <taxon>eudicotyledons</taxon>
        <taxon>Gunneridae</taxon>
        <taxon>Pentapetalae</taxon>
        <taxon>rosids</taxon>
        <taxon>fabids</taxon>
        <taxon>Fabales</taxon>
        <taxon>Fabaceae</taxon>
        <taxon>Papilionoideae</taxon>
        <taxon>50 kb inversion clade</taxon>
        <taxon>NPAAA clade</taxon>
        <taxon>Hologalegina</taxon>
        <taxon>IRL clade</taxon>
        <taxon>Trifolieae</taxon>
        <taxon>Medicago</taxon>
    </lineage>
</organism>
<feature type="initiator methionine" description="Removed" evidence="1">
    <location>
        <position position="1"/>
    </location>
</feature>
<feature type="chain" id="PRO_0000192986" description="Leghemoglobin-1">
    <location>
        <begin position="2"/>
        <end position="147"/>
    </location>
</feature>
<feature type="domain" description="Globin" evidence="7">
    <location>
        <begin position="2"/>
        <end position="147"/>
    </location>
</feature>
<feature type="binding site" evidence="4">
    <location>
        <position position="45"/>
    </location>
    <ligand>
        <name>heme b</name>
        <dbReference type="ChEBI" id="CHEBI:60344"/>
    </ligand>
</feature>
<feature type="binding site" evidence="4">
    <location>
        <position position="62"/>
    </location>
    <ligand>
        <name>O2</name>
        <dbReference type="ChEBI" id="CHEBI:15379"/>
    </ligand>
</feature>
<feature type="binding site" evidence="4">
    <location>
        <position position="65"/>
    </location>
    <ligand>
        <name>heme b</name>
        <dbReference type="ChEBI" id="CHEBI:60344"/>
    </ligand>
</feature>
<feature type="binding site" description="proximal binding residue" evidence="7">
    <location>
        <position position="94"/>
    </location>
    <ligand>
        <name>heme b</name>
        <dbReference type="ChEBI" id="CHEBI:60344"/>
    </ligand>
    <ligandPart>
        <name>Fe</name>
        <dbReference type="ChEBI" id="CHEBI:18248"/>
    </ligandPart>
</feature>
<feature type="binding site" evidence="4">
    <location>
        <position position="97"/>
    </location>
    <ligand>
        <name>heme b</name>
        <dbReference type="ChEBI" id="CHEBI:60344"/>
    </ligand>
</feature>
<feature type="modified residue" description="Nitrated tyrosine" evidence="2">
    <location>
        <position position="25"/>
    </location>
</feature>
<feature type="modified residue" description="Nitrated tyrosine" evidence="2">
    <location>
        <position position="30"/>
    </location>
</feature>
<feature type="modified residue" description="Phosphoserine" evidence="5">
    <location>
        <position position="45"/>
    </location>
</feature>
<feature type="modified residue" description="Nitrated tyrosine" evidence="2">
    <location>
        <position position="135"/>
    </location>
</feature>
<feature type="sequence conflict" description="In Ref. 2; CAA32492/AAA32657." evidence="9" ref="2">
    <original>V</original>
    <variation>I</variation>
    <location>
        <position position="33"/>
    </location>
</feature>
<keyword id="KW-0963">Cytoplasm</keyword>
<keyword id="KW-0349">Heme</keyword>
<keyword id="KW-0408">Iron</keyword>
<keyword id="KW-0479">Metal-binding</keyword>
<keyword id="KW-0944">Nitration</keyword>
<keyword id="KW-0535">Nitrogen fixation</keyword>
<keyword id="KW-0536">Nodulation</keyword>
<keyword id="KW-0539">Nucleus</keyword>
<keyword id="KW-0561">Oxygen transport</keyword>
<keyword id="KW-0597">Phosphoprotein</keyword>
<keyword id="KW-0813">Transport</keyword>
<evidence type="ECO:0000250" key="1">
    <source>
        <dbReference type="UniProtKB" id="P02233"/>
    </source>
</evidence>
<evidence type="ECO:0000250" key="2">
    <source>
        <dbReference type="UniProtKB" id="P02234"/>
    </source>
</evidence>
<evidence type="ECO:0000250" key="3">
    <source>
        <dbReference type="UniProtKB" id="P02237"/>
    </source>
</evidence>
<evidence type="ECO:0000250" key="4">
    <source>
        <dbReference type="UniProtKB" id="P02240"/>
    </source>
</evidence>
<evidence type="ECO:0000250" key="5">
    <source>
        <dbReference type="UniProtKB" id="Q3C1F7"/>
    </source>
</evidence>
<evidence type="ECO:0000250" key="6">
    <source>
        <dbReference type="UniProtKB" id="Q43296"/>
    </source>
</evidence>
<evidence type="ECO:0000255" key="7">
    <source>
        <dbReference type="PROSITE-ProRule" id="PRU00238"/>
    </source>
</evidence>
<evidence type="ECO:0000269" key="8">
    <source ref="2"/>
</evidence>
<evidence type="ECO:0000305" key="9"/>
<comment type="function">
    <text evidence="3 6">Leghemoglobin that reversibly binds oxygen O(2) through a pentacoordinated heme iron (By similarity). In root nodules, facilitates the diffusion of oxygen to the bacteroids while preventing the bacterial nitrogenase from being inactivated by buffering dioxygen, nitric oxide and carbon monoxide, and promoting the formation of reactive oxygen species (ROS, e.g. H(2)O(2)) (By similarity). This role is essential for symbiotic nitrogen fixation (SNF) (By similarity).</text>
</comment>
<comment type="subunit">
    <text evidence="4">Monomer.</text>
</comment>
<comment type="subcellular location">
    <subcellularLocation>
        <location evidence="4">Cytoplasm</location>
        <location evidence="4">Cytosol</location>
    </subcellularLocation>
    <subcellularLocation>
        <location evidence="4">Nucleus</location>
    </subcellularLocation>
</comment>
<comment type="tissue specificity">
    <text evidence="8">Root nodules.</text>
</comment>
<comment type="PTM">
    <text evidence="2">Nitrated in effective nodules and particularly in hypoxic conditions; this mechanism may play a protective role in the symbiosis by buffering toxic peroxynitrite NO(2)(-). Nitration level decrease during nodule senescence.</text>
</comment>
<comment type="PTM">
    <text evidence="5">Phosphorylation at Ser-45 disrupts the molecular environment of its porphyrin ring oxygen binding pocket, thus leading to a reduced oxygen consumption and to the delivery of oxygen O(2) to symbiosomes.</text>
</comment>
<comment type="similarity">
    <text evidence="9">Belongs to the plant globin family.</text>
</comment>
<sequence length="147" mass="16055">MSFTDKQEALVNSSWEAFKQNLPRYSVFFYTVVLEKAPAAKGLFSFLKNSAEVQDSPQLQAHAEKVFGLVRDSAVQLRATGGVVLGDATLGAIHVRKGVVDPHFVVVKEALLKTIKEAAGDKWSEELNTAWEVAYDALATAIKKAMS</sequence>
<protein>
    <recommendedName>
        <fullName>Leghemoglobin-1</fullName>
    </recommendedName>
    <alternativeName>
        <fullName>Leghemoglobin I</fullName>
    </alternativeName>
</protein>
<dbReference type="EMBL" id="X13375">
    <property type="protein sequence ID" value="CAA31750.1"/>
    <property type="molecule type" value="mRNA"/>
</dbReference>
<dbReference type="EMBL" id="X14311">
    <property type="protein sequence ID" value="CAA32492.1"/>
    <property type="molecule type" value="mRNA"/>
</dbReference>
<dbReference type="EMBL" id="M36100">
    <property type="protein sequence ID" value="AAA32657.1"/>
    <property type="molecule type" value="mRNA"/>
</dbReference>
<dbReference type="PIR" id="S08508">
    <property type="entry name" value="S08508"/>
</dbReference>
<dbReference type="PIR" id="S15768">
    <property type="entry name" value="S15768"/>
</dbReference>
<dbReference type="SMR" id="P09187"/>
<dbReference type="GO" id="GO:0005829">
    <property type="term" value="C:cytosol"/>
    <property type="evidence" value="ECO:0007669"/>
    <property type="project" value="UniProtKB-SubCell"/>
</dbReference>
<dbReference type="GO" id="GO:0005634">
    <property type="term" value="C:nucleus"/>
    <property type="evidence" value="ECO:0007669"/>
    <property type="project" value="UniProtKB-SubCell"/>
</dbReference>
<dbReference type="GO" id="GO:0020037">
    <property type="term" value="F:heme binding"/>
    <property type="evidence" value="ECO:0007669"/>
    <property type="project" value="InterPro"/>
</dbReference>
<dbReference type="GO" id="GO:0046872">
    <property type="term" value="F:metal ion binding"/>
    <property type="evidence" value="ECO:0007669"/>
    <property type="project" value="UniProtKB-KW"/>
</dbReference>
<dbReference type="GO" id="GO:0019825">
    <property type="term" value="F:oxygen binding"/>
    <property type="evidence" value="ECO:0007669"/>
    <property type="project" value="InterPro"/>
</dbReference>
<dbReference type="GO" id="GO:0005344">
    <property type="term" value="F:oxygen carrier activity"/>
    <property type="evidence" value="ECO:0007669"/>
    <property type="project" value="UniProtKB-KW"/>
</dbReference>
<dbReference type="GO" id="GO:0009877">
    <property type="term" value="P:nodulation"/>
    <property type="evidence" value="ECO:0007669"/>
    <property type="project" value="UniProtKB-KW"/>
</dbReference>
<dbReference type="CDD" id="cd08923">
    <property type="entry name" value="class1-2_nsHbs_Lbs"/>
    <property type="match status" value="1"/>
</dbReference>
<dbReference type="Gene3D" id="1.10.490.10">
    <property type="entry name" value="Globins"/>
    <property type="match status" value="1"/>
</dbReference>
<dbReference type="InterPro" id="IPR000971">
    <property type="entry name" value="Globin"/>
</dbReference>
<dbReference type="InterPro" id="IPR009050">
    <property type="entry name" value="Globin-like_sf"/>
</dbReference>
<dbReference type="InterPro" id="IPR012292">
    <property type="entry name" value="Globin/Proto"/>
</dbReference>
<dbReference type="InterPro" id="IPR001032">
    <property type="entry name" value="Leghaemoglobin-like"/>
</dbReference>
<dbReference type="InterPro" id="IPR019824">
    <property type="entry name" value="Leghaemoglobin_Fe_BS"/>
</dbReference>
<dbReference type="PANTHER" id="PTHR22924">
    <property type="entry name" value="LEGHEMOGLOBIN-RELATED"/>
    <property type="match status" value="1"/>
</dbReference>
<dbReference type="PANTHER" id="PTHR22924:SF92">
    <property type="entry name" value="NON-SYMBIOTIC HEMOGLOBIN 2"/>
    <property type="match status" value="1"/>
</dbReference>
<dbReference type="Pfam" id="PF00042">
    <property type="entry name" value="Globin"/>
    <property type="match status" value="1"/>
</dbReference>
<dbReference type="PRINTS" id="PR00188">
    <property type="entry name" value="PLANTGLOBIN"/>
</dbReference>
<dbReference type="SUPFAM" id="SSF46458">
    <property type="entry name" value="Globin-like"/>
    <property type="match status" value="1"/>
</dbReference>
<dbReference type="PROSITE" id="PS01033">
    <property type="entry name" value="GLOBIN"/>
    <property type="match status" value="1"/>
</dbReference>
<dbReference type="PROSITE" id="PS00208">
    <property type="entry name" value="PLANT_GLOBIN"/>
    <property type="match status" value="1"/>
</dbReference>
<name>LGB1_MEDSA</name>